<accession>Q493W4</accession>
<keyword id="KW-1003">Cell membrane</keyword>
<keyword id="KW-0210">Decarboxylase</keyword>
<keyword id="KW-0444">Lipid biosynthesis</keyword>
<keyword id="KW-0443">Lipid metabolism</keyword>
<keyword id="KW-0456">Lyase</keyword>
<keyword id="KW-0472">Membrane</keyword>
<keyword id="KW-0594">Phospholipid biosynthesis</keyword>
<keyword id="KW-1208">Phospholipid metabolism</keyword>
<keyword id="KW-0670">Pyruvate</keyword>
<keyword id="KW-1185">Reference proteome</keyword>
<keyword id="KW-0865">Zymogen</keyword>
<dbReference type="EC" id="4.1.1.65" evidence="1"/>
<dbReference type="EMBL" id="CP000016">
    <property type="protein sequence ID" value="AAZ40720.1"/>
    <property type="molecule type" value="Genomic_DNA"/>
</dbReference>
<dbReference type="RefSeq" id="WP_011282626.1">
    <property type="nucleotide sequence ID" value="NC_007292.1"/>
</dbReference>
<dbReference type="SMR" id="Q493W4"/>
<dbReference type="STRING" id="291272.BPEN_076"/>
<dbReference type="KEGG" id="bpn:BPEN_076"/>
<dbReference type="eggNOG" id="COG0688">
    <property type="taxonomic scope" value="Bacteria"/>
</dbReference>
<dbReference type="HOGENOM" id="CLU_029061_4_1_6"/>
<dbReference type="OrthoDB" id="9802030at2"/>
<dbReference type="UniPathway" id="UPA00558">
    <property type="reaction ID" value="UER00616"/>
</dbReference>
<dbReference type="Proteomes" id="UP000007794">
    <property type="component" value="Chromosome"/>
</dbReference>
<dbReference type="GO" id="GO:0005886">
    <property type="term" value="C:plasma membrane"/>
    <property type="evidence" value="ECO:0007669"/>
    <property type="project" value="UniProtKB-SubCell"/>
</dbReference>
<dbReference type="GO" id="GO:0004609">
    <property type="term" value="F:phosphatidylserine decarboxylase activity"/>
    <property type="evidence" value="ECO:0007669"/>
    <property type="project" value="UniProtKB-UniRule"/>
</dbReference>
<dbReference type="GO" id="GO:0006646">
    <property type="term" value="P:phosphatidylethanolamine biosynthetic process"/>
    <property type="evidence" value="ECO:0007669"/>
    <property type="project" value="UniProtKB-UniRule"/>
</dbReference>
<dbReference type="HAMAP" id="MF_00662">
    <property type="entry name" value="PS_decarb_PSD_B_type1"/>
    <property type="match status" value="1"/>
</dbReference>
<dbReference type="InterPro" id="IPR003817">
    <property type="entry name" value="PS_Dcarbxylase"/>
</dbReference>
<dbReference type="InterPro" id="IPR033177">
    <property type="entry name" value="PSD-B"/>
</dbReference>
<dbReference type="InterPro" id="IPR033178">
    <property type="entry name" value="PSD_type1_pro"/>
</dbReference>
<dbReference type="NCBIfam" id="TIGR00163">
    <property type="entry name" value="PS_decarb"/>
    <property type="match status" value="1"/>
</dbReference>
<dbReference type="PANTHER" id="PTHR10067">
    <property type="entry name" value="PHOSPHATIDYLSERINE DECARBOXYLASE"/>
    <property type="match status" value="1"/>
</dbReference>
<dbReference type="PANTHER" id="PTHR10067:SF6">
    <property type="entry name" value="PHOSPHATIDYLSERINE DECARBOXYLASE PROENZYME, MITOCHONDRIAL"/>
    <property type="match status" value="1"/>
</dbReference>
<dbReference type="Pfam" id="PF02666">
    <property type="entry name" value="PS_Dcarbxylase"/>
    <property type="match status" value="1"/>
</dbReference>
<gene>
    <name evidence="1" type="primary">psd</name>
    <name type="ordered locus">BPEN_076</name>
</gene>
<reference key="1">
    <citation type="journal article" date="2005" name="Genome Res.">
        <title>Genome sequence of Blochmannia pennsylvanicus indicates parallel evolutionary trends among bacterial mutualists of insects.</title>
        <authorList>
            <person name="Degnan P.H."/>
            <person name="Lazarus A.B."/>
            <person name="Wernegreen J.J."/>
        </authorList>
    </citation>
    <scope>NUCLEOTIDE SEQUENCE [LARGE SCALE GENOMIC DNA]</scope>
    <source>
        <strain>BPEN</strain>
    </source>
</reference>
<feature type="chain" id="PRO_0000262095" description="Phosphatidylserine decarboxylase beta chain" evidence="1">
    <location>
        <begin position="1"/>
        <end position="257"/>
    </location>
</feature>
<feature type="chain" id="PRO_0000262096" description="Phosphatidylserine decarboxylase alpha chain" evidence="1">
    <location>
        <begin position="258"/>
        <end position="295"/>
    </location>
</feature>
<feature type="active site" description="Charge relay system; for autoendoproteolytic cleavage activity" evidence="1">
    <location>
        <position position="90"/>
    </location>
</feature>
<feature type="active site" description="Charge relay system; for autoendoproteolytic cleavage activity" evidence="1">
    <location>
        <position position="258"/>
    </location>
</feature>
<feature type="active site" description="Schiff-base intermediate with substrate; via pyruvic acid; for decarboxylase activity" evidence="1">
    <location>
        <position position="258"/>
    </location>
</feature>
<feature type="site" description="Cleavage (non-hydrolytic); by autocatalysis" evidence="1">
    <location>
        <begin position="257"/>
        <end position="258"/>
    </location>
</feature>
<feature type="modified residue" description="Pyruvic acid (Ser); by autocatalysis" evidence="1">
    <location>
        <position position="258"/>
    </location>
</feature>
<organism>
    <name type="scientific">Blochmanniella pennsylvanica (strain BPEN)</name>
    <dbReference type="NCBI Taxonomy" id="291272"/>
    <lineage>
        <taxon>Bacteria</taxon>
        <taxon>Pseudomonadati</taxon>
        <taxon>Pseudomonadota</taxon>
        <taxon>Gammaproteobacteria</taxon>
        <taxon>Enterobacterales</taxon>
        <taxon>Enterobacteriaceae</taxon>
        <taxon>ant endosymbionts</taxon>
        <taxon>Candidatus Blochmanniella</taxon>
    </lineage>
</organism>
<name>PSD_BLOPB</name>
<protein>
    <recommendedName>
        <fullName evidence="1">Phosphatidylserine decarboxylase proenzyme</fullName>
        <ecNumber evidence="1">4.1.1.65</ecNumber>
    </recommendedName>
    <component>
        <recommendedName>
            <fullName evidence="1">Phosphatidylserine decarboxylase alpha chain</fullName>
        </recommendedName>
    </component>
    <component>
        <recommendedName>
            <fullName evidence="1">Phosphatidylserine decarboxylase beta chain</fullName>
        </recommendedName>
    </component>
</protein>
<sequence>MLEKIQILLQYLLPKYWITYLVGLGASWKGGWITRYAILLFIHIYKIDMKESDKPNLTDYATFNAFFTRKLHKNARPIDTNPSTLIIPADGIITQIGKINQTNIFRVKNAPYHLDGLLAGHDNIIDYFINGSFVIIYIPPQNCHRIYMPCTGTLREVLYIPGNLFSVHPKITKNMPNIFSRNERVICLFETDFGYMAQILIGAIIVGSIETTWLGTITPPREGIVRHWRYSSNNTNTDADDSIILQKGHEMGLFKLGSTVINLFGDKKVILNNLLQPYDIARIGMPLAHGHSQKK</sequence>
<evidence type="ECO:0000255" key="1">
    <source>
        <dbReference type="HAMAP-Rule" id="MF_00662"/>
    </source>
</evidence>
<proteinExistence type="inferred from homology"/>
<comment type="function">
    <text evidence="1">Catalyzes the formation of phosphatidylethanolamine (PtdEtn) from phosphatidylserine (PtdSer).</text>
</comment>
<comment type="catalytic activity">
    <reaction evidence="1">
        <text>a 1,2-diacyl-sn-glycero-3-phospho-L-serine + H(+) = a 1,2-diacyl-sn-glycero-3-phosphoethanolamine + CO2</text>
        <dbReference type="Rhea" id="RHEA:20828"/>
        <dbReference type="ChEBI" id="CHEBI:15378"/>
        <dbReference type="ChEBI" id="CHEBI:16526"/>
        <dbReference type="ChEBI" id="CHEBI:57262"/>
        <dbReference type="ChEBI" id="CHEBI:64612"/>
        <dbReference type="EC" id="4.1.1.65"/>
    </reaction>
</comment>
<comment type="cofactor">
    <cofactor evidence="1">
        <name>pyruvate</name>
        <dbReference type="ChEBI" id="CHEBI:15361"/>
    </cofactor>
    <text evidence="1">Binds 1 pyruvoyl group covalently per subunit.</text>
</comment>
<comment type="pathway">
    <text evidence="1">Phospholipid metabolism; phosphatidylethanolamine biosynthesis; phosphatidylethanolamine from CDP-diacylglycerol: step 2/2.</text>
</comment>
<comment type="subunit">
    <text evidence="1">Heterodimer of a large membrane-associated beta subunit and a small pyruvoyl-containing alpha subunit.</text>
</comment>
<comment type="subcellular location">
    <subcellularLocation>
        <location evidence="1">Cell membrane</location>
        <topology evidence="1">Peripheral membrane protein</topology>
    </subcellularLocation>
</comment>
<comment type="PTM">
    <text evidence="1">Is synthesized initially as an inactive proenzyme. Formation of the active enzyme involves a self-maturation process in which the active site pyruvoyl group is generated from an internal serine residue via an autocatalytic post-translational modification. Two non-identical subunits are generated from the proenzyme in this reaction, and the pyruvate is formed at the N-terminus of the alpha chain, which is derived from the carboxyl end of the proenzyme. The autoendoproteolytic cleavage occurs by a canonical serine protease mechanism, in which the side chain hydroxyl group of the serine supplies its oxygen atom to form the C-terminus of the beta chain, while the remainder of the serine residue undergoes an oxidative deamination to produce ammonia and the pyruvoyl prosthetic group on the alpha chain. During this reaction, the Ser that is part of the protease active site of the proenzyme becomes the pyruvoyl prosthetic group, which constitutes an essential element of the active site of the mature decarboxylase.</text>
</comment>
<comment type="similarity">
    <text evidence="1">Belongs to the phosphatidylserine decarboxylase family. PSD-B subfamily. Prokaryotic type I sub-subfamily.</text>
</comment>